<reference key="1">
    <citation type="submission" date="2008-02" db="EMBL/GenBank/DDBJ databases">
        <title>Complete sequence of Escherichia coli C str. ATCC 8739.</title>
        <authorList>
            <person name="Copeland A."/>
            <person name="Lucas S."/>
            <person name="Lapidus A."/>
            <person name="Glavina del Rio T."/>
            <person name="Dalin E."/>
            <person name="Tice H."/>
            <person name="Bruce D."/>
            <person name="Goodwin L."/>
            <person name="Pitluck S."/>
            <person name="Kiss H."/>
            <person name="Brettin T."/>
            <person name="Detter J.C."/>
            <person name="Han C."/>
            <person name="Kuske C.R."/>
            <person name="Schmutz J."/>
            <person name="Larimer F."/>
            <person name="Land M."/>
            <person name="Hauser L."/>
            <person name="Kyrpides N."/>
            <person name="Mikhailova N."/>
            <person name="Ingram L."/>
            <person name="Richardson P."/>
        </authorList>
    </citation>
    <scope>NUCLEOTIDE SEQUENCE [LARGE SCALE GENOMIC DNA]</scope>
    <source>
        <strain>ATCC 8739 / DSM 1576 / NBRC 3972 / NCIMB 8545 / WDCM 00012 / Crooks</strain>
    </source>
</reference>
<gene>
    <name evidence="1" type="primary">psiE</name>
    <name type="ordered locus">EcolC_3999</name>
</gene>
<evidence type="ECO:0000255" key="1">
    <source>
        <dbReference type="HAMAP-Rule" id="MF_01048"/>
    </source>
</evidence>
<dbReference type="EMBL" id="CP000946">
    <property type="protein sequence ID" value="ACA79598.1"/>
    <property type="molecule type" value="Genomic_DNA"/>
</dbReference>
<dbReference type="RefSeq" id="WP_000202902.1">
    <property type="nucleotide sequence ID" value="NZ_MTFT01000033.1"/>
</dbReference>
<dbReference type="SMR" id="B1IUM1"/>
<dbReference type="GeneID" id="93777857"/>
<dbReference type="KEGG" id="ecl:EcolC_3999"/>
<dbReference type="HOGENOM" id="CLU_127561_0_1_6"/>
<dbReference type="GO" id="GO:0005886">
    <property type="term" value="C:plasma membrane"/>
    <property type="evidence" value="ECO:0007669"/>
    <property type="project" value="UniProtKB-SubCell"/>
</dbReference>
<dbReference type="GO" id="GO:0016036">
    <property type="term" value="P:cellular response to phosphate starvation"/>
    <property type="evidence" value="ECO:0007669"/>
    <property type="project" value="InterPro"/>
</dbReference>
<dbReference type="HAMAP" id="MF_01048">
    <property type="entry name" value="PsiE"/>
    <property type="match status" value="1"/>
</dbReference>
<dbReference type="InterPro" id="IPR009315">
    <property type="entry name" value="P_starv_induced_PsiE"/>
</dbReference>
<dbReference type="InterPro" id="IPR020948">
    <property type="entry name" value="P_starv_induced_PsiE-like"/>
</dbReference>
<dbReference type="NCBIfam" id="NF002764">
    <property type="entry name" value="PRK02833.1-2"/>
    <property type="match status" value="1"/>
</dbReference>
<dbReference type="NCBIfam" id="NF002765">
    <property type="entry name" value="PRK02833.1-3"/>
    <property type="match status" value="1"/>
</dbReference>
<dbReference type="NCBIfam" id="NF002767">
    <property type="entry name" value="PRK02833.1-5"/>
    <property type="match status" value="1"/>
</dbReference>
<dbReference type="PANTHER" id="PTHR37819">
    <property type="entry name" value="PROTEIN PSIE"/>
    <property type="match status" value="1"/>
</dbReference>
<dbReference type="PANTHER" id="PTHR37819:SF1">
    <property type="entry name" value="PROTEIN PSIE"/>
    <property type="match status" value="1"/>
</dbReference>
<dbReference type="Pfam" id="PF06146">
    <property type="entry name" value="PsiE"/>
    <property type="match status" value="1"/>
</dbReference>
<dbReference type="PIRSF" id="PIRSF029598">
    <property type="entry name" value="PsiE"/>
    <property type="match status" value="1"/>
</dbReference>
<keyword id="KW-0997">Cell inner membrane</keyword>
<keyword id="KW-1003">Cell membrane</keyword>
<keyword id="KW-0472">Membrane</keyword>
<keyword id="KW-0812">Transmembrane</keyword>
<keyword id="KW-1133">Transmembrane helix</keyword>
<sequence length="136" mass="15597">MTSLSRPRVEFISTILQTVLNLGLLCLGLILVVFLGKETVHLADVLFAPEQTSKYELVEGLVVYFLYFEFIALIVKYFQSGFHFPLRYFVYIGITAIVRLIIVDHKSPLDVLIYSAAILLLVITLWLCNSKRLKRE</sequence>
<protein>
    <recommendedName>
        <fullName evidence="1">Protein PsiE</fullName>
    </recommendedName>
</protein>
<name>PSIE_ECOLC</name>
<feature type="chain" id="PRO_1000084418" description="Protein PsiE">
    <location>
        <begin position="1"/>
        <end position="136"/>
    </location>
</feature>
<feature type="transmembrane region" description="Helical" evidence="1">
    <location>
        <begin position="15"/>
        <end position="35"/>
    </location>
</feature>
<feature type="transmembrane region" description="Helical" evidence="1">
    <location>
        <begin position="55"/>
        <end position="75"/>
    </location>
</feature>
<feature type="transmembrane region" description="Helical" evidence="1">
    <location>
        <begin position="82"/>
        <end position="102"/>
    </location>
</feature>
<feature type="transmembrane region" description="Helical" evidence="1">
    <location>
        <begin position="108"/>
        <end position="128"/>
    </location>
</feature>
<comment type="subcellular location">
    <subcellularLocation>
        <location evidence="1">Cell inner membrane</location>
        <topology evidence="1">Multi-pass membrane protein</topology>
    </subcellularLocation>
</comment>
<comment type="similarity">
    <text evidence="1">Belongs to the PsiE family.</text>
</comment>
<organism>
    <name type="scientific">Escherichia coli (strain ATCC 8739 / DSM 1576 / NBRC 3972 / NCIMB 8545 / WDCM 00012 / Crooks)</name>
    <dbReference type="NCBI Taxonomy" id="481805"/>
    <lineage>
        <taxon>Bacteria</taxon>
        <taxon>Pseudomonadati</taxon>
        <taxon>Pseudomonadota</taxon>
        <taxon>Gammaproteobacteria</taxon>
        <taxon>Enterobacterales</taxon>
        <taxon>Enterobacteriaceae</taxon>
        <taxon>Escherichia</taxon>
    </lineage>
</organism>
<accession>B1IUM1</accession>
<proteinExistence type="inferred from homology"/>